<accession>Q6XQ14</accession>
<evidence type="ECO:0000250" key="1"/>
<evidence type="ECO:0000255" key="2"/>
<evidence type="ECO:0000269" key="3">
    <source>
    </source>
</evidence>
<evidence type="ECO:0000269" key="4">
    <source>
    </source>
</evidence>
<evidence type="ECO:0000305" key="5"/>
<comment type="function">
    <text evidence="4">Catalyzes the conversion of (E)-2-methylpropanal oxime (valox) to 2-hydroxy-2-methylpropanenitrile (acetone cyanohydrin) and of (E)-2-methylbutanal oxime (ilox) to 2-hydroxy-2-methylbutyronitrile. The reaction takes place in three steps. First, the oxime is isomerized to the (Z)- isomer, next the (Z)-isomer is dehydrated to the corresponding nitrile, followed by a C-hydroxylation of the nitrile. Can use both aliphatic and aromatic oximes as substrates.</text>
</comment>
<comment type="catalytic activity">
    <reaction evidence="4">
        <text>(1E,2S)-2-methylbutanal oxime + reduced [NADPH--hemoprotein reductase] + O2 = 2-hydroxy-2-methylbutanenitrile + oxidized [NADPH--hemoprotein reductase] + 2 H2O + H(+)</text>
        <dbReference type="Rhea" id="RHEA:28422"/>
        <dbReference type="Rhea" id="RHEA-COMP:11964"/>
        <dbReference type="Rhea" id="RHEA-COMP:11965"/>
        <dbReference type="ChEBI" id="CHEBI:15377"/>
        <dbReference type="ChEBI" id="CHEBI:15378"/>
        <dbReference type="ChEBI" id="CHEBI:15379"/>
        <dbReference type="ChEBI" id="CHEBI:57618"/>
        <dbReference type="ChEBI" id="CHEBI:58210"/>
        <dbReference type="ChEBI" id="CHEBI:60954"/>
        <dbReference type="ChEBI" id="CHEBI:134628"/>
        <dbReference type="EC" id="1.14.14.41"/>
    </reaction>
</comment>
<comment type="catalytic activity">
    <reaction evidence="4">
        <text>(E)-2-methylpropanal oxime + reduced [NADPH--hemoprotein reductase] + O2 = 2-hydroxy-2-methylpropanenitrile + oxidized [NADPH--hemoprotein reductase] + 2 H2O + H(+)</text>
        <dbReference type="Rhea" id="RHEA:51952"/>
        <dbReference type="Rhea" id="RHEA-COMP:11964"/>
        <dbReference type="Rhea" id="RHEA-COMP:11965"/>
        <dbReference type="ChEBI" id="CHEBI:15348"/>
        <dbReference type="ChEBI" id="CHEBI:15377"/>
        <dbReference type="ChEBI" id="CHEBI:15378"/>
        <dbReference type="ChEBI" id="CHEBI:15379"/>
        <dbReference type="ChEBI" id="CHEBI:57618"/>
        <dbReference type="ChEBI" id="CHEBI:58210"/>
        <dbReference type="ChEBI" id="CHEBI:61143"/>
        <dbReference type="EC" id="1.14.14.41"/>
    </reaction>
</comment>
<comment type="cofactor">
    <cofactor evidence="1">
        <name>heme</name>
        <dbReference type="ChEBI" id="CHEBI:30413"/>
    </cofactor>
</comment>
<comment type="biophysicochemical properties">
    <kinetics>
        <KM evidence="4">21 uM for (Z)-2-methylbutanal oxime</KM>
    </kinetics>
</comment>
<comment type="subcellular location">
    <subcellularLocation>
        <location evidence="5">Microsome membrane</location>
        <topology evidence="5">Multi-pass membrane protein</topology>
    </subcellularLocation>
</comment>
<comment type="tissue specificity">
    <text evidence="3 4">Expressed in storage roots, primary roots, petioles and vascular tissues. Expressed in the outer cortex cells, the endodermis and around the xylem, phloem cells and laticifers.</text>
</comment>
<comment type="similarity">
    <text evidence="5">Belongs to the cytochrome P450 family.</text>
</comment>
<name>C71E7_MANES</name>
<organism>
    <name type="scientific">Manihot esculenta</name>
    <name type="common">Cassava</name>
    <name type="synonym">Jatropha manihot</name>
    <dbReference type="NCBI Taxonomy" id="3983"/>
    <lineage>
        <taxon>Eukaryota</taxon>
        <taxon>Viridiplantae</taxon>
        <taxon>Streptophyta</taxon>
        <taxon>Embryophyta</taxon>
        <taxon>Tracheophyta</taxon>
        <taxon>Spermatophyta</taxon>
        <taxon>Magnoliopsida</taxon>
        <taxon>eudicotyledons</taxon>
        <taxon>Gunneridae</taxon>
        <taxon>Pentapetalae</taxon>
        <taxon>rosids</taxon>
        <taxon>fabids</taxon>
        <taxon>Malpighiales</taxon>
        <taxon>Euphorbiaceae</taxon>
        <taxon>Crotonoideae</taxon>
        <taxon>Manihoteae</taxon>
        <taxon>Manihot</taxon>
    </lineage>
</organism>
<sequence length="511" mass="58578">MSVAILTSLPPQWLSILAVFLLPILTLLLFRGKDDNQKKGLKLPPGPRQLPLIGNLHQLGGQPYVDFWKMAKKYGPVMYLQLGRCPTVVLSSTETSKELMKDRDVECCSRPLSVGPGQLSYNFLDVAFSPYSDYWREMRKLFIFELLSMRRVQTFWYAREEQMDKMIEILDGAYPNPVNLTEKVFNMMDGIIGTIAFGRTTYAQQEFRDGFVKVLAATMDMLDNFHAENFFPVVGRFIDSLTGALAKRQRTFTDVDRYFEKVIEQHLDPNRPKPETEDIVDVLIGLMKDESTSFKITKDHVKAILMNVFVGGIDTSAVTITWAFSELLKNPKLMKKAQEEVRRAVGPNKRRVEGKEVEKIKYIDCIVKETFRKHPPVPLLVPHFSMKHCKIGGYDILPGTTIYVNAWAMGKDPTIWENPEEYNPDRFMNSEVDFRGSDFELVPFGAGRRICPGLAMGTTAVKYILSNLLYGWDYEMPRGKKFEDFPLIEEGGLTVHNKQDIMVIPKKHKWD</sequence>
<dbReference type="EC" id="1.14.14.41" evidence="4"/>
<dbReference type="EMBL" id="AY217351">
    <property type="protein sequence ID" value="AAP57704.1"/>
    <property type="molecule type" value="mRNA"/>
</dbReference>
<dbReference type="SMR" id="Q6XQ14"/>
<dbReference type="KEGG" id="ag:AAP57704"/>
<dbReference type="BioCyc" id="MetaCyc:MONOMER-16012"/>
<dbReference type="BRENDA" id="1.14.14.41">
    <property type="organism ID" value="3175"/>
</dbReference>
<dbReference type="GO" id="GO:0005783">
    <property type="term" value="C:endoplasmic reticulum"/>
    <property type="evidence" value="ECO:0007669"/>
    <property type="project" value="UniProtKB-KW"/>
</dbReference>
<dbReference type="GO" id="GO:0016020">
    <property type="term" value="C:membrane"/>
    <property type="evidence" value="ECO:0007669"/>
    <property type="project" value="UniProtKB-KW"/>
</dbReference>
<dbReference type="GO" id="GO:0020037">
    <property type="term" value="F:heme binding"/>
    <property type="evidence" value="ECO:0007669"/>
    <property type="project" value="InterPro"/>
</dbReference>
<dbReference type="GO" id="GO:0005506">
    <property type="term" value="F:iron ion binding"/>
    <property type="evidence" value="ECO:0007669"/>
    <property type="project" value="InterPro"/>
</dbReference>
<dbReference type="GO" id="GO:0004497">
    <property type="term" value="F:monooxygenase activity"/>
    <property type="evidence" value="ECO:0007669"/>
    <property type="project" value="UniProtKB-KW"/>
</dbReference>
<dbReference type="GO" id="GO:0016705">
    <property type="term" value="F:oxidoreductase activity, acting on paired donors, with incorporation or reduction of molecular oxygen"/>
    <property type="evidence" value="ECO:0007669"/>
    <property type="project" value="InterPro"/>
</dbReference>
<dbReference type="CDD" id="cd11072">
    <property type="entry name" value="CYP71-like"/>
    <property type="match status" value="1"/>
</dbReference>
<dbReference type="FunFam" id="1.10.630.10:FF:000043">
    <property type="entry name" value="Cytochrome P450 99A2"/>
    <property type="match status" value="1"/>
</dbReference>
<dbReference type="Gene3D" id="1.10.630.10">
    <property type="entry name" value="Cytochrome P450"/>
    <property type="match status" value="1"/>
</dbReference>
<dbReference type="InterPro" id="IPR001128">
    <property type="entry name" value="Cyt_P450"/>
</dbReference>
<dbReference type="InterPro" id="IPR017972">
    <property type="entry name" value="Cyt_P450_CS"/>
</dbReference>
<dbReference type="InterPro" id="IPR002401">
    <property type="entry name" value="Cyt_P450_E_grp-I"/>
</dbReference>
<dbReference type="InterPro" id="IPR036396">
    <property type="entry name" value="Cyt_P450_sf"/>
</dbReference>
<dbReference type="PANTHER" id="PTHR47955:SF11">
    <property type="entry name" value="4-HYDROXYPHENYLACETALDEHYDE OXIME MONOOXYGENASE"/>
    <property type="match status" value="1"/>
</dbReference>
<dbReference type="PANTHER" id="PTHR47955">
    <property type="entry name" value="CYTOCHROME P450 FAMILY 71 PROTEIN"/>
    <property type="match status" value="1"/>
</dbReference>
<dbReference type="Pfam" id="PF00067">
    <property type="entry name" value="p450"/>
    <property type="match status" value="1"/>
</dbReference>
<dbReference type="PRINTS" id="PR00463">
    <property type="entry name" value="EP450I"/>
</dbReference>
<dbReference type="PRINTS" id="PR00385">
    <property type="entry name" value="P450"/>
</dbReference>
<dbReference type="SUPFAM" id="SSF48264">
    <property type="entry name" value="Cytochrome P450"/>
    <property type="match status" value="1"/>
</dbReference>
<dbReference type="PROSITE" id="PS00086">
    <property type="entry name" value="CYTOCHROME_P450"/>
    <property type="match status" value="1"/>
</dbReference>
<gene>
    <name type="primary">CYP71E7</name>
    <name type="synonym">c15</name>
</gene>
<protein>
    <recommendedName>
        <fullName>2-methylbutanal oxime monooxygenase</fullName>
        <ecNumber evidence="4">1.14.14.41</ecNumber>
    </recommendedName>
    <alternativeName>
        <fullName>Cytochrome P450 71E7</fullName>
    </alternativeName>
</protein>
<feature type="chain" id="PRO_0000407326" description="2-methylbutanal oxime monooxygenase">
    <location>
        <begin position="1"/>
        <end position="511"/>
    </location>
</feature>
<feature type="transmembrane region" description="Helical" evidence="2">
    <location>
        <begin position="10"/>
        <end position="30"/>
    </location>
</feature>
<feature type="transmembrane region" description="Helical" evidence="2">
    <location>
        <begin position="304"/>
        <end position="324"/>
    </location>
</feature>
<feature type="binding site" description="axial binding residue" evidence="1">
    <location>
        <position position="451"/>
    </location>
    <ligand>
        <name>heme</name>
        <dbReference type="ChEBI" id="CHEBI:30413"/>
    </ligand>
    <ligandPart>
        <name>Fe</name>
        <dbReference type="ChEBI" id="CHEBI:18248"/>
    </ligandPart>
</feature>
<keyword id="KW-0256">Endoplasmic reticulum</keyword>
<keyword id="KW-0349">Heme</keyword>
<keyword id="KW-0408">Iron</keyword>
<keyword id="KW-0472">Membrane</keyword>
<keyword id="KW-0479">Metal-binding</keyword>
<keyword id="KW-0492">Microsome</keyword>
<keyword id="KW-0503">Monooxygenase</keyword>
<keyword id="KW-0560">Oxidoreductase</keyword>
<keyword id="KW-0812">Transmembrane</keyword>
<keyword id="KW-1133">Transmembrane helix</keyword>
<proteinExistence type="evidence at protein level"/>
<reference key="1">
    <citation type="journal article" date="2003" name="Planta">
        <title>Two cassava promoters related to vascular expression and storage root formation.</title>
        <authorList>
            <person name="Zhang P."/>
            <person name="Bohl-Zenger S."/>
            <person name="Puonti-Kaerlas J."/>
            <person name="Potrykus I."/>
            <person name="Gruissem W."/>
        </authorList>
    </citation>
    <scope>NUCLEOTIDE SEQUENCE [MRNA]</scope>
    <scope>TISSUE SPECIFICITY</scope>
</reference>
<reference key="2">
    <citation type="journal article" date="2011" name="Plant Physiol.">
        <title>Biosynthesis of the cyanogenic glucosides linamarin and lotaustralin in cassava: isolation, biochemical characterization, and expression pattern of CYP71E7, the oxime-metabolizing cytochrome P450 enzyme.</title>
        <authorList>
            <person name="Joergensen K."/>
            <person name="Morant A.V."/>
            <person name="Morant M."/>
            <person name="Jensen N.B."/>
            <person name="Olsen C.E."/>
            <person name="Kannangara R."/>
            <person name="Motawia M.S."/>
            <person name="Moeller B.L."/>
            <person name="Bak S."/>
        </authorList>
    </citation>
    <scope>FUNCTION</scope>
    <scope>CATALYTIC ACTIVITY</scope>
    <scope>BIOPHYSICOCHEMICAL PROPERTIES</scope>
    <scope>TISSUE SPECIFICITY</scope>
</reference>